<organism>
    <name type="scientific">Acidovorax ebreus (strain TPSY)</name>
    <name type="common">Diaphorobacter sp. (strain TPSY)</name>
    <dbReference type="NCBI Taxonomy" id="535289"/>
    <lineage>
        <taxon>Bacteria</taxon>
        <taxon>Pseudomonadati</taxon>
        <taxon>Pseudomonadota</taxon>
        <taxon>Betaproteobacteria</taxon>
        <taxon>Burkholderiales</taxon>
        <taxon>Comamonadaceae</taxon>
        <taxon>Diaphorobacter</taxon>
    </lineage>
</organism>
<evidence type="ECO:0000255" key="1">
    <source>
        <dbReference type="HAMAP-Rule" id="MF_00142"/>
    </source>
</evidence>
<reference key="1">
    <citation type="submission" date="2009-01" db="EMBL/GenBank/DDBJ databases">
        <title>Complete sequence of Diaphorobacter sp. TPSY.</title>
        <authorList>
            <consortium name="US DOE Joint Genome Institute"/>
            <person name="Lucas S."/>
            <person name="Copeland A."/>
            <person name="Lapidus A."/>
            <person name="Glavina del Rio T."/>
            <person name="Tice H."/>
            <person name="Bruce D."/>
            <person name="Goodwin L."/>
            <person name="Pitluck S."/>
            <person name="Chertkov O."/>
            <person name="Brettin T."/>
            <person name="Detter J.C."/>
            <person name="Han C."/>
            <person name="Larimer F."/>
            <person name="Land M."/>
            <person name="Hauser L."/>
            <person name="Kyrpides N."/>
            <person name="Mikhailova N."/>
            <person name="Coates J.D."/>
        </authorList>
    </citation>
    <scope>NUCLEOTIDE SEQUENCE [LARGE SCALE GENOMIC DNA]</scope>
    <source>
        <strain>TPSY</strain>
    </source>
</reference>
<feature type="chain" id="PRO_1000123042" description="Iron-sulfur cluster assembly protein CyaY">
    <location>
        <begin position="1"/>
        <end position="109"/>
    </location>
</feature>
<accession>B9MDE4</accession>
<dbReference type="EMBL" id="CP001392">
    <property type="protein sequence ID" value="ACM32176.1"/>
    <property type="molecule type" value="Genomic_DNA"/>
</dbReference>
<dbReference type="RefSeq" id="WP_012655694.1">
    <property type="nucleotide sequence ID" value="NC_011992.1"/>
</dbReference>
<dbReference type="SMR" id="B9MDE4"/>
<dbReference type="GeneID" id="84682745"/>
<dbReference type="KEGG" id="dia:Dtpsy_0697"/>
<dbReference type="eggNOG" id="COG1965">
    <property type="taxonomic scope" value="Bacteria"/>
</dbReference>
<dbReference type="HOGENOM" id="CLU_080880_3_0_4"/>
<dbReference type="Proteomes" id="UP000000450">
    <property type="component" value="Chromosome"/>
</dbReference>
<dbReference type="GO" id="GO:0005737">
    <property type="term" value="C:cytoplasm"/>
    <property type="evidence" value="ECO:0007669"/>
    <property type="project" value="UniProtKB-ARBA"/>
</dbReference>
<dbReference type="GO" id="GO:0008199">
    <property type="term" value="F:ferric iron binding"/>
    <property type="evidence" value="ECO:0007669"/>
    <property type="project" value="InterPro"/>
</dbReference>
<dbReference type="GO" id="GO:0016226">
    <property type="term" value="P:iron-sulfur cluster assembly"/>
    <property type="evidence" value="ECO:0007669"/>
    <property type="project" value="UniProtKB-UniRule"/>
</dbReference>
<dbReference type="Gene3D" id="3.30.920.10">
    <property type="entry name" value="Frataxin/CyaY"/>
    <property type="match status" value="1"/>
</dbReference>
<dbReference type="HAMAP" id="MF_00142">
    <property type="entry name" value="CyaY"/>
    <property type="match status" value="1"/>
</dbReference>
<dbReference type="InterPro" id="IPR047584">
    <property type="entry name" value="CyaY"/>
</dbReference>
<dbReference type="InterPro" id="IPR002908">
    <property type="entry name" value="Frataxin/CyaY"/>
</dbReference>
<dbReference type="InterPro" id="IPR036524">
    <property type="entry name" value="Frataxin/CyaY_sf"/>
</dbReference>
<dbReference type="InterPro" id="IPR020895">
    <property type="entry name" value="Frataxin_CS"/>
</dbReference>
<dbReference type="NCBIfam" id="TIGR03421">
    <property type="entry name" value="FeS_CyaY"/>
    <property type="match status" value="1"/>
</dbReference>
<dbReference type="Pfam" id="PF01491">
    <property type="entry name" value="Frataxin_Cyay"/>
    <property type="match status" value="1"/>
</dbReference>
<dbReference type="SMART" id="SM01219">
    <property type="entry name" value="Frataxin_Cyay"/>
    <property type="match status" value="1"/>
</dbReference>
<dbReference type="SUPFAM" id="SSF55387">
    <property type="entry name" value="Frataxin/Nqo15-like"/>
    <property type="match status" value="1"/>
</dbReference>
<dbReference type="PROSITE" id="PS01344">
    <property type="entry name" value="FRATAXIN_1"/>
    <property type="match status" value="1"/>
</dbReference>
<dbReference type="PROSITE" id="PS50810">
    <property type="entry name" value="FRATAXIN_2"/>
    <property type="match status" value="1"/>
</dbReference>
<sequence>MTDLEFMDRAEKLLLAVEQSCDRINDTTDADLDGQRTGGMVTITFRNRSQIVINLQKPLHEIWMAAQSGGYHFRHDGTAWMDTKGAGEFFAALSHNATLQAGEALQFTD</sequence>
<gene>
    <name evidence="1" type="primary">cyaY</name>
    <name type="ordered locus">Dtpsy_0697</name>
</gene>
<keyword id="KW-0408">Iron</keyword>
<keyword id="KW-0479">Metal-binding</keyword>
<keyword id="KW-1185">Reference proteome</keyword>
<proteinExistence type="inferred from homology"/>
<comment type="function">
    <text evidence="1">Involved in iron-sulfur (Fe-S) cluster assembly. May act as a regulator of Fe-S biogenesis.</text>
</comment>
<comment type="similarity">
    <text evidence="1">Belongs to the frataxin family.</text>
</comment>
<protein>
    <recommendedName>
        <fullName evidence="1">Iron-sulfur cluster assembly protein CyaY</fullName>
    </recommendedName>
</protein>
<name>CYAY_ACIET</name>